<keyword id="KW-0963">Cytoplasm</keyword>
<keyword id="KW-0441">Lipid A biosynthesis</keyword>
<keyword id="KW-0444">Lipid biosynthesis</keyword>
<keyword id="KW-0443">Lipid metabolism</keyword>
<keyword id="KW-0456">Lyase</keyword>
<accession>Q5L724</accession>
<protein>
    <recommendedName>
        <fullName evidence="1">3-hydroxyacyl-[acyl-carrier-protein] dehydratase FabZ</fullName>
        <ecNumber evidence="1">4.2.1.59</ecNumber>
    </recommendedName>
    <alternativeName>
        <fullName evidence="1">(3R)-hydroxymyristoyl-[acyl-carrier-protein] dehydratase</fullName>
        <shortName evidence="1">(3R)-hydroxymyristoyl-ACP dehydrase</shortName>
    </alternativeName>
    <alternativeName>
        <fullName evidence="1">Beta-hydroxyacyl-ACP dehydratase</fullName>
    </alternativeName>
</protein>
<comment type="function">
    <text evidence="1">Involved in unsaturated fatty acids biosynthesis. Catalyzes the dehydration of short chain beta-hydroxyacyl-ACPs and long chain saturated and unsaturated beta-hydroxyacyl-ACPs.</text>
</comment>
<comment type="catalytic activity">
    <reaction evidence="1">
        <text>a (3R)-hydroxyacyl-[ACP] = a (2E)-enoyl-[ACP] + H2O</text>
        <dbReference type="Rhea" id="RHEA:13097"/>
        <dbReference type="Rhea" id="RHEA-COMP:9925"/>
        <dbReference type="Rhea" id="RHEA-COMP:9945"/>
        <dbReference type="ChEBI" id="CHEBI:15377"/>
        <dbReference type="ChEBI" id="CHEBI:78784"/>
        <dbReference type="ChEBI" id="CHEBI:78827"/>
        <dbReference type="EC" id="4.2.1.59"/>
    </reaction>
</comment>
<comment type="subcellular location">
    <subcellularLocation>
        <location evidence="1">Cytoplasm</location>
    </subcellularLocation>
</comment>
<comment type="similarity">
    <text evidence="1">Belongs to the thioester dehydratase family. FabZ subfamily.</text>
</comment>
<proteinExistence type="inferred from homology"/>
<feature type="chain" id="PRO_0000230809" description="3-hydroxyacyl-[acyl-carrier-protein] dehydratase FabZ">
    <location>
        <begin position="1"/>
        <end position="154"/>
    </location>
</feature>
<feature type="active site" evidence="1">
    <location>
        <position position="54"/>
    </location>
</feature>
<reference key="1">
    <citation type="journal article" date="2005" name="Genome Res.">
        <title>The Chlamydophila abortus genome sequence reveals an array of variable proteins that contribute to interspecies variation.</title>
        <authorList>
            <person name="Thomson N.R."/>
            <person name="Yeats C."/>
            <person name="Bell K."/>
            <person name="Holden M.T.G."/>
            <person name="Bentley S.D."/>
            <person name="Livingstone M."/>
            <person name="Cerdeno-Tarraga A.-M."/>
            <person name="Harris B."/>
            <person name="Doggett J."/>
            <person name="Ormond D."/>
            <person name="Mungall K."/>
            <person name="Clarke K."/>
            <person name="Feltwell T."/>
            <person name="Hance Z."/>
            <person name="Sanders M."/>
            <person name="Quail M.A."/>
            <person name="Price C."/>
            <person name="Barrell B.G."/>
            <person name="Parkhill J."/>
            <person name="Longbottom D."/>
        </authorList>
    </citation>
    <scope>NUCLEOTIDE SEQUENCE [LARGE SCALE GENOMIC DNA]</scope>
    <source>
        <strain>DSM 27085 / S26/3</strain>
    </source>
</reference>
<name>FABZ_CHLAB</name>
<evidence type="ECO:0000255" key="1">
    <source>
        <dbReference type="HAMAP-Rule" id="MF_00406"/>
    </source>
</evidence>
<sequence length="154" mass="16835">MKESPVIKLRELLNLLPHRYPFLLVDKVLSYDLERRSIVAQKNVTINEPFFVGHFPEAPIMPGVLILESLAQAAGVLLGLVLENDRNKRLALFLGIHKAKFRQAVKPGDILTLSAEFSLISSKGGKASARACVGSQVAAEGELSFALVDKKSLD</sequence>
<dbReference type="EC" id="4.2.1.59" evidence="1"/>
<dbReference type="EMBL" id="CR848038">
    <property type="protein sequence ID" value="CAH63546.1"/>
    <property type="molecule type" value="Genomic_DNA"/>
</dbReference>
<dbReference type="RefSeq" id="WP_006343761.1">
    <property type="nucleotide sequence ID" value="NC_004552.2"/>
</dbReference>
<dbReference type="SMR" id="Q5L724"/>
<dbReference type="GeneID" id="93024635"/>
<dbReference type="KEGG" id="cab:CAB089"/>
<dbReference type="eggNOG" id="COG0764">
    <property type="taxonomic scope" value="Bacteria"/>
</dbReference>
<dbReference type="HOGENOM" id="CLU_078912_3_3_0"/>
<dbReference type="OrthoDB" id="9772788at2"/>
<dbReference type="Proteomes" id="UP000001012">
    <property type="component" value="Chromosome"/>
</dbReference>
<dbReference type="GO" id="GO:0005737">
    <property type="term" value="C:cytoplasm"/>
    <property type="evidence" value="ECO:0007669"/>
    <property type="project" value="UniProtKB-SubCell"/>
</dbReference>
<dbReference type="GO" id="GO:0016020">
    <property type="term" value="C:membrane"/>
    <property type="evidence" value="ECO:0007669"/>
    <property type="project" value="GOC"/>
</dbReference>
<dbReference type="GO" id="GO:0019171">
    <property type="term" value="F:(3R)-hydroxyacyl-[acyl-carrier-protein] dehydratase activity"/>
    <property type="evidence" value="ECO:0007669"/>
    <property type="project" value="UniProtKB-EC"/>
</dbReference>
<dbReference type="GO" id="GO:0006633">
    <property type="term" value="P:fatty acid biosynthetic process"/>
    <property type="evidence" value="ECO:0007669"/>
    <property type="project" value="UniProtKB-UniRule"/>
</dbReference>
<dbReference type="GO" id="GO:0009245">
    <property type="term" value="P:lipid A biosynthetic process"/>
    <property type="evidence" value="ECO:0007669"/>
    <property type="project" value="UniProtKB-UniRule"/>
</dbReference>
<dbReference type="CDD" id="cd01288">
    <property type="entry name" value="FabZ"/>
    <property type="match status" value="1"/>
</dbReference>
<dbReference type="FunFam" id="3.10.129.10:FF:000001">
    <property type="entry name" value="3-hydroxyacyl-[acyl-carrier-protein] dehydratase FabZ"/>
    <property type="match status" value="1"/>
</dbReference>
<dbReference type="Gene3D" id="3.10.129.10">
    <property type="entry name" value="Hotdog Thioesterase"/>
    <property type="match status" value="1"/>
</dbReference>
<dbReference type="HAMAP" id="MF_00406">
    <property type="entry name" value="FabZ"/>
    <property type="match status" value="1"/>
</dbReference>
<dbReference type="InterPro" id="IPR013114">
    <property type="entry name" value="FabA_FabZ"/>
</dbReference>
<dbReference type="InterPro" id="IPR010084">
    <property type="entry name" value="FabZ"/>
</dbReference>
<dbReference type="InterPro" id="IPR029069">
    <property type="entry name" value="HotDog_dom_sf"/>
</dbReference>
<dbReference type="NCBIfam" id="TIGR01750">
    <property type="entry name" value="fabZ"/>
    <property type="match status" value="1"/>
</dbReference>
<dbReference type="NCBIfam" id="NF000582">
    <property type="entry name" value="PRK00006.1"/>
    <property type="match status" value="1"/>
</dbReference>
<dbReference type="PANTHER" id="PTHR30272">
    <property type="entry name" value="3-HYDROXYACYL-[ACYL-CARRIER-PROTEIN] DEHYDRATASE"/>
    <property type="match status" value="1"/>
</dbReference>
<dbReference type="PANTHER" id="PTHR30272:SF1">
    <property type="entry name" value="3-HYDROXYACYL-[ACYL-CARRIER-PROTEIN] DEHYDRATASE"/>
    <property type="match status" value="1"/>
</dbReference>
<dbReference type="Pfam" id="PF07977">
    <property type="entry name" value="FabA"/>
    <property type="match status" value="1"/>
</dbReference>
<dbReference type="SUPFAM" id="SSF54637">
    <property type="entry name" value="Thioesterase/thiol ester dehydrase-isomerase"/>
    <property type="match status" value="1"/>
</dbReference>
<gene>
    <name evidence="1" type="primary">fabZ</name>
    <name type="ordered locus">CAB089</name>
</gene>
<organism>
    <name type="scientific">Chlamydia abortus (strain DSM 27085 / S26/3)</name>
    <name type="common">Chlamydophila abortus</name>
    <dbReference type="NCBI Taxonomy" id="218497"/>
    <lineage>
        <taxon>Bacteria</taxon>
        <taxon>Pseudomonadati</taxon>
        <taxon>Chlamydiota</taxon>
        <taxon>Chlamydiia</taxon>
        <taxon>Chlamydiales</taxon>
        <taxon>Chlamydiaceae</taxon>
        <taxon>Chlamydia/Chlamydophila group</taxon>
        <taxon>Chlamydia</taxon>
    </lineage>
</organism>